<proteinExistence type="inferred from homology"/>
<evidence type="ECO:0000255" key="1">
    <source>
        <dbReference type="HAMAP-Rule" id="MF_00332"/>
    </source>
</evidence>
<evidence type="ECO:0000256" key="2">
    <source>
        <dbReference type="SAM" id="MobiDB-lite"/>
    </source>
</evidence>
<name>DNAK_LEPBL</name>
<comment type="function">
    <text evidence="1">Acts as a chaperone.</text>
</comment>
<comment type="induction">
    <text evidence="1">By stress conditions e.g. heat shock.</text>
</comment>
<comment type="similarity">
    <text evidence="1">Belongs to the heat shock protein 70 family.</text>
</comment>
<reference key="1">
    <citation type="journal article" date="2006" name="Proc. Natl. Acad. Sci. U.S.A.">
        <title>Genome reduction in Leptospira borgpetersenii reflects limited transmission potential.</title>
        <authorList>
            <person name="Bulach D.M."/>
            <person name="Zuerner R.L."/>
            <person name="Wilson P."/>
            <person name="Seemann T."/>
            <person name="McGrath A."/>
            <person name="Cullen P.A."/>
            <person name="Davis J."/>
            <person name="Johnson M."/>
            <person name="Kuczek E."/>
            <person name="Alt D.P."/>
            <person name="Peterson-Burch B."/>
            <person name="Coppel R.L."/>
            <person name="Rood J.I."/>
            <person name="Davies J.K."/>
            <person name="Adler B."/>
        </authorList>
    </citation>
    <scope>NUCLEOTIDE SEQUENCE [LARGE SCALE GENOMIC DNA]</scope>
    <source>
        <strain>L550</strain>
    </source>
</reference>
<keyword id="KW-0067">ATP-binding</keyword>
<keyword id="KW-0143">Chaperone</keyword>
<keyword id="KW-0547">Nucleotide-binding</keyword>
<keyword id="KW-0597">Phosphoprotein</keyword>
<keyword id="KW-0346">Stress response</keyword>
<sequence length="645" mass="69002">MSKEKIIGIDLGTTNSVVSVMEGGDPVVIQNSEGARTTPSIVAFTAKGENLVGQFAKNQAITNAVNTIRSAKRFIGRRIGECESEMKHVSYKVIRSGNEGVKFETSAGEFTPQEISARVLMKMKQTAEDYLGQKVTKAVITVPAYFNDEQRQATKDAGRIAGLEVERIINEPTAAALAYGFDKKNVNSKIAVYDLGGGTFDISILELADGVFEVKSTNGDTHLGGDDFDMAIMEWMISEFKNQTGIDISADKNTVQRLKEAAEKAKIELSGTMSTQINLPFITADASGPKHLDMTLSRAKFDQLTKSLVDRTRIPCENALRDAGLKASDINEVILVGGSIRIPAVQELVKQIFGKEPNKSVNPDEVVAVGAAIQGGVLAGEVSDVLLLDVTPLSLGIETLGGVMTKLIERNTTIPTKKSQVFSTAADNQSAVSIHVLQGEREMASANRTLGRFDLIGIPPAPRGVPQIEVTFDIDANGIVHVSAKDLGTGKEQKIRIESSSGLSEDEIQKMVKDAEAHAAADKAQREVIEAKNELDTLAYSLEKTVNEAGDKIGASEKQLATDEVKRAREAIESNDKARMESAKASISKIASDIATKVYSQGAPGAEQAAGSTGPDQGQNDQGNSGNNGEKVVDADYTVVDDEKK</sequence>
<feature type="chain" id="PRO_1000119722" description="Chaperone protein DnaK">
    <location>
        <begin position="1"/>
        <end position="645"/>
    </location>
</feature>
<feature type="region of interest" description="Disordered" evidence="2">
    <location>
        <begin position="602"/>
        <end position="645"/>
    </location>
</feature>
<feature type="compositionally biased region" description="Low complexity" evidence="2">
    <location>
        <begin position="616"/>
        <end position="629"/>
    </location>
</feature>
<feature type="modified residue" description="Phosphothreonine; by autocatalysis" evidence="1">
    <location>
        <position position="199"/>
    </location>
</feature>
<organism>
    <name type="scientific">Leptospira borgpetersenii serovar Hardjo-bovis (strain L550)</name>
    <dbReference type="NCBI Taxonomy" id="355276"/>
    <lineage>
        <taxon>Bacteria</taxon>
        <taxon>Pseudomonadati</taxon>
        <taxon>Spirochaetota</taxon>
        <taxon>Spirochaetia</taxon>
        <taxon>Leptospirales</taxon>
        <taxon>Leptospiraceae</taxon>
        <taxon>Leptospira</taxon>
    </lineage>
</organism>
<protein>
    <recommendedName>
        <fullName evidence="1">Chaperone protein DnaK</fullName>
    </recommendedName>
    <alternativeName>
        <fullName evidence="1">HSP70</fullName>
    </alternativeName>
    <alternativeName>
        <fullName evidence="1">Heat shock 70 kDa protein</fullName>
    </alternativeName>
    <alternativeName>
        <fullName evidence="1">Heat shock protein 70</fullName>
    </alternativeName>
</protein>
<dbReference type="EMBL" id="CP000348">
    <property type="protein sequence ID" value="ABJ79998.1"/>
    <property type="molecule type" value="Genomic_DNA"/>
</dbReference>
<dbReference type="RefSeq" id="WP_011670944.1">
    <property type="nucleotide sequence ID" value="NC_008508.1"/>
</dbReference>
<dbReference type="SMR" id="Q04Y47"/>
<dbReference type="KEGG" id="lbl:LBL_2644"/>
<dbReference type="HOGENOM" id="CLU_005965_2_4_12"/>
<dbReference type="GO" id="GO:0005524">
    <property type="term" value="F:ATP binding"/>
    <property type="evidence" value="ECO:0007669"/>
    <property type="project" value="UniProtKB-UniRule"/>
</dbReference>
<dbReference type="GO" id="GO:0140662">
    <property type="term" value="F:ATP-dependent protein folding chaperone"/>
    <property type="evidence" value="ECO:0007669"/>
    <property type="project" value="InterPro"/>
</dbReference>
<dbReference type="GO" id="GO:0051082">
    <property type="term" value="F:unfolded protein binding"/>
    <property type="evidence" value="ECO:0007669"/>
    <property type="project" value="InterPro"/>
</dbReference>
<dbReference type="CDD" id="cd10234">
    <property type="entry name" value="ASKHA_NBD_HSP70_DnaK-like"/>
    <property type="match status" value="1"/>
</dbReference>
<dbReference type="FunFam" id="2.60.34.10:FF:000014">
    <property type="entry name" value="Chaperone protein DnaK HSP70"/>
    <property type="match status" value="1"/>
</dbReference>
<dbReference type="FunFam" id="3.30.420.40:FF:000020">
    <property type="entry name" value="Chaperone protein HscA homolog"/>
    <property type="match status" value="1"/>
</dbReference>
<dbReference type="FunFam" id="1.20.1270.10:FF:000001">
    <property type="entry name" value="Molecular chaperone DnaK"/>
    <property type="match status" value="1"/>
</dbReference>
<dbReference type="FunFam" id="3.30.420.40:FF:000004">
    <property type="entry name" value="Molecular chaperone DnaK"/>
    <property type="match status" value="1"/>
</dbReference>
<dbReference type="FunFam" id="3.90.640.10:FF:000003">
    <property type="entry name" value="Molecular chaperone DnaK"/>
    <property type="match status" value="1"/>
</dbReference>
<dbReference type="Gene3D" id="1.20.1270.10">
    <property type="match status" value="1"/>
</dbReference>
<dbReference type="Gene3D" id="3.30.420.40">
    <property type="match status" value="2"/>
</dbReference>
<dbReference type="Gene3D" id="3.90.640.10">
    <property type="entry name" value="Actin, Chain A, domain 4"/>
    <property type="match status" value="1"/>
</dbReference>
<dbReference type="Gene3D" id="2.60.34.10">
    <property type="entry name" value="Substrate Binding Domain Of DNAk, Chain A, domain 1"/>
    <property type="match status" value="1"/>
</dbReference>
<dbReference type="HAMAP" id="MF_00332">
    <property type="entry name" value="DnaK"/>
    <property type="match status" value="1"/>
</dbReference>
<dbReference type="InterPro" id="IPR043129">
    <property type="entry name" value="ATPase_NBD"/>
</dbReference>
<dbReference type="InterPro" id="IPR012725">
    <property type="entry name" value="Chaperone_DnaK"/>
</dbReference>
<dbReference type="InterPro" id="IPR018181">
    <property type="entry name" value="Heat_shock_70_CS"/>
</dbReference>
<dbReference type="InterPro" id="IPR029048">
    <property type="entry name" value="HSP70_C_sf"/>
</dbReference>
<dbReference type="InterPro" id="IPR029047">
    <property type="entry name" value="HSP70_peptide-bd_sf"/>
</dbReference>
<dbReference type="InterPro" id="IPR013126">
    <property type="entry name" value="Hsp_70_fam"/>
</dbReference>
<dbReference type="NCBIfam" id="NF001413">
    <property type="entry name" value="PRK00290.1"/>
    <property type="match status" value="1"/>
</dbReference>
<dbReference type="NCBIfam" id="NF003520">
    <property type="entry name" value="PRK05183.1"/>
    <property type="match status" value="1"/>
</dbReference>
<dbReference type="NCBIfam" id="TIGR02350">
    <property type="entry name" value="prok_dnaK"/>
    <property type="match status" value="1"/>
</dbReference>
<dbReference type="PANTHER" id="PTHR19375">
    <property type="entry name" value="HEAT SHOCK PROTEIN 70KDA"/>
    <property type="match status" value="1"/>
</dbReference>
<dbReference type="Pfam" id="PF00012">
    <property type="entry name" value="HSP70"/>
    <property type="match status" value="1"/>
</dbReference>
<dbReference type="PRINTS" id="PR00301">
    <property type="entry name" value="HEATSHOCK70"/>
</dbReference>
<dbReference type="SUPFAM" id="SSF53067">
    <property type="entry name" value="Actin-like ATPase domain"/>
    <property type="match status" value="2"/>
</dbReference>
<dbReference type="SUPFAM" id="SSF100934">
    <property type="entry name" value="Heat shock protein 70kD (HSP70), C-terminal subdomain"/>
    <property type="match status" value="1"/>
</dbReference>
<dbReference type="SUPFAM" id="SSF100920">
    <property type="entry name" value="Heat shock protein 70kD (HSP70), peptide-binding domain"/>
    <property type="match status" value="1"/>
</dbReference>
<dbReference type="PROSITE" id="PS00297">
    <property type="entry name" value="HSP70_1"/>
    <property type="match status" value="1"/>
</dbReference>
<dbReference type="PROSITE" id="PS00329">
    <property type="entry name" value="HSP70_2"/>
    <property type="match status" value="1"/>
</dbReference>
<accession>Q04Y47</accession>
<gene>
    <name evidence="1" type="primary">dnaK</name>
    <name type="ordered locus">LBL_2644</name>
</gene>